<accession>G0SBS8</accession>
<accession>G0ZGT8</accession>
<dbReference type="EMBL" id="GL988045">
    <property type="protein sequence ID" value="EGS18854.1"/>
    <property type="molecule type" value="Genomic_DNA"/>
</dbReference>
<dbReference type="EMBL" id="JF276278">
    <property type="protein sequence ID" value="AEL00676.1"/>
    <property type="molecule type" value="Genomic_DNA"/>
</dbReference>
<dbReference type="RefSeq" id="XP_006695799.1">
    <property type="nucleotide sequence ID" value="XM_006695736.1"/>
</dbReference>
<dbReference type="PDB" id="5CWW">
    <property type="method" value="X-ray"/>
    <property type="resolution" value="2.20 A"/>
    <property type="chains" value="C=1449-1480"/>
</dbReference>
<dbReference type="PDBsum" id="5CWW"/>
<dbReference type="SMR" id="G0SBS8"/>
<dbReference type="DIP" id="DIP-61838N"/>
<dbReference type="IntAct" id="G0SBS8">
    <property type="interactions" value="3"/>
</dbReference>
<dbReference type="STRING" id="759272.G0SBS8"/>
<dbReference type="TCDB" id="1.I.1.1.2">
    <property type="family name" value="the nuclear pore complex (npc) family"/>
</dbReference>
<dbReference type="GeneID" id="18259503"/>
<dbReference type="KEGG" id="cthr:CTHT_0054650"/>
<dbReference type="eggNOG" id="KOG3630">
    <property type="taxonomic scope" value="Eukaryota"/>
</dbReference>
<dbReference type="HOGENOM" id="CLU_003852_0_0_1"/>
<dbReference type="OMA" id="RGQCASI"/>
<dbReference type="OrthoDB" id="248320at2759"/>
<dbReference type="Proteomes" id="UP000008066">
    <property type="component" value="Unassembled WGS sequence"/>
</dbReference>
<dbReference type="GO" id="GO:0031965">
    <property type="term" value="C:nuclear membrane"/>
    <property type="evidence" value="ECO:0007669"/>
    <property type="project" value="UniProtKB-SubCell"/>
</dbReference>
<dbReference type="GO" id="GO:0005643">
    <property type="term" value="C:nuclear pore"/>
    <property type="evidence" value="ECO:0007669"/>
    <property type="project" value="UniProtKB-SubCell"/>
</dbReference>
<dbReference type="GO" id="GO:0008139">
    <property type="term" value="F:nuclear localization sequence binding"/>
    <property type="evidence" value="ECO:0007669"/>
    <property type="project" value="TreeGrafter"/>
</dbReference>
<dbReference type="GO" id="GO:0017056">
    <property type="term" value="F:structural constituent of nuclear pore"/>
    <property type="evidence" value="ECO:0007669"/>
    <property type="project" value="TreeGrafter"/>
</dbReference>
<dbReference type="GO" id="GO:0051028">
    <property type="term" value="P:mRNA transport"/>
    <property type="evidence" value="ECO:0007669"/>
    <property type="project" value="UniProtKB-KW"/>
</dbReference>
<dbReference type="GO" id="GO:0006606">
    <property type="term" value="P:protein import into nucleus"/>
    <property type="evidence" value="ECO:0007669"/>
    <property type="project" value="TreeGrafter"/>
</dbReference>
<dbReference type="GO" id="GO:0006405">
    <property type="term" value="P:RNA export from nucleus"/>
    <property type="evidence" value="ECO:0007669"/>
    <property type="project" value="TreeGrafter"/>
</dbReference>
<dbReference type="FunFam" id="2.130.10.10:FF:000645">
    <property type="entry name" value="Putative nuclear pore complex subunit Nup159"/>
    <property type="match status" value="1"/>
</dbReference>
<dbReference type="Gene3D" id="2.130.10.10">
    <property type="entry name" value="YVTN repeat-like/Quinoprotein amine dehydrogenase"/>
    <property type="match status" value="1"/>
</dbReference>
<dbReference type="InterPro" id="IPR026054">
    <property type="entry name" value="Nucleoporin"/>
</dbReference>
<dbReference type="InterPro" id="IPR039462">
    <property type="entry name" value="Nup159/Nup146_N"/>
</dbReference>
<dbReference type="InterPro" id="IPR015943">
    <property type="entry name" value="WD40/YVTN_repeat-like_dom_sf"/>
</dbReference>
<dbReference type="PANTHER" id="PTHR23193">
    <property type="entry name" value="NUCLEAR PORE COMPLEX PROTEIN NUP"/>
    <property type="match status" value="1"/>
</dbReference>
<dbReference type="PANTHER" id="PTHR23193:SF23">
    <property type="entry name" value="NUCLEAR PORE COMPLEX PROTEIN NUP153"/>
    <property type="match status" value="1"/>
</dbReference>
<dbReference type="Pfam" id="PF16755">
    <property type="entry name" value="Beta-prop_NUP159_NUP214"/>
    <property type="match status" value="1"/>
</dbReference>
<dbReference type="SUPFAM" id="SSF117289">
    <property type="entry name" value="Nucleoporin domain"/>
    <property type="match status" value="1"/>
</dbReference>
<proteinExistence type="evidence at protein level"/>
<organism>
    <name type="scientific">Chaetomium thermophilum (strain DSM 1495 / CBS 144.50 / IMI 039719)</name>
    <name type="common">Thermochaetoides thermophila</name>
    <dbReference type="NCBI Taxonomy" id="759272"/>
    <lineage>
        <taxon>Eukaryota</taxon>
        <taxon>Fungi</taxon>
        <taxon>Dikarya</taxon>
        <taxon>Ascomycota</taxon>
        <taxon>Pezizomycotina</taxon>
        <taxon>Sordariomycetes</taxon>
        <taxon>Sordariomycetidae</taxon>
        <taxon>Sordariales</taxon>
        <taxon>Chaetomiaceae</taxon>
        <taxon>Thermochaetoides</taxon>
    </lineage>
</organism>
<name>NU159_CHATD</name>
<gene>
    <name type="primary">NUP159</name>
    <name type="ORF">CTHT_0054650</name>
</gene>
<comment type="function">
    <text evidence="1">Functions as a component of the nuclear pore complex (NPC). NPC components, collectively referred to as nucleoporins (NUPs), can play the role of both NPC structural components and of docking or interaction partners for transiently associated nuclear transport factors. Active directional transport is assured by both, a Phe-Gly (FG) repeat affinity gradient for these transport factors across the NPC and a transport cofactor concentration gradient across the nuclear envelope (GSP1 and GSP2 GTPases associated predominantly with GTP in the nucleus, with GDP in the cytoplasm). NUP159 plays an important role in several nuclear export pathways including poly(A)+ RNA, pre-ribosome, and protein export.</text>
</comment>
<comment type="subunit">
    <text evidence="1 5">Component of the nuclear pore complex (NPC). NPC constitutes the exclusive means of nucleocytoplasmic transport. NPCs allow the passive diffusion of ions and small molecules and the active, nuclear transport receptor-mediated bidirectional transport of macromolecules such as proteins, RNAs, ribonucleoparticles (RNPs), and ribosomal subunits across the nuclear envelope. Due to its 8-fold rotational symmetry, all subunits are present with 8 copies or multiples thereof.</text>
</comment>
<comment type="subcellular location">
    <subcellularLocation>
        <location evidence="1">Nucleus</location>
        <location evidence="1">Nuclear pore complex</location>
    </subcellularLocation>
    <subcellularLocation>
        <location evidence="1">Nucleus membrane</location>
        <topology evidence="1">Peripheral membrane protein</topology>
        <orientation evidence="1">Cytoplasmic side</orientation>
    </subcellularLocation>
</comment>
<comment type="domain">
    <text evidence="1">Contains FG repeats. FG repeats are interaction sites for karyopherins (importins, exportins) and form probably an affinity gradient, guiding the transport proteins unidirectionally with their cargo through the NPC. FG repeat regions are highly flexible and lack ordered secondary structure. The overall conservation of FG repeats regarding exact sequence, spacing, and repeat unit length is limited. FG repeat types and their physico-chemical environment change across the NPC from the nucleoplasmic to the cytoplasmic side: PXFG repeats are especially abundant in NUPs on the cytoplasmic side.</text>
</comment>
<protein>
    <recommendedName>
        <fullName evidence="4">Nucleoporin NUP159</fullName>
    </recommendedName>
    <alternativeName>
        <fullName>Nuclear pore protein NUP159</fullName>
    </alternativeName>
</protein>
<evidence type="ECO:0000250" key="1">
    <source>
        <dbReference type="UniProtKB" id="P40477"/>
    </source>
</evidence>
<evidence type="ECO:0000255" key="2"/>
<evidence type="ECO:0000256" key="3">
    <source>
        <dbReference type="SAM" id="MobiDB-lite"/>
    </source>
</evidence>
<evidence type="ECO:0000303" key="4">
    <source>
    </source>
</evidence>
<evidence type="ECO:0000305" key="5">
    <source>
    </source>
</evidence>
<evidence type="ECO:0007829" key="6">
    <source>
        <dbReference type="PDB" id="5CWW"/>
    </source>
</evidence>
<sequence>MAFSFGNAGGGGGGVTQGKDLEVIQTEGLGFLALAGDAKVQLTSKWSPPPAPTASLLSIASRKGLVAAAGPDAVHVATTESVRKAFLAEKNGDSEVRPFNPEAKLPLPLRISQLAFTADEQYLVLSAETGGGLRAYDVNSLTQGNTQSAFELATNGETLRQLAPNPMPESAAFCAIVTTNGNLYMANLAERTLVSGPNGPTLRSQVSCAAWSTKGKQLVAGMADGSIYQMTPDGTEKAHIPKPPNLGDYHVSSVVWLENNVFLTIHNPTNSTNPDDKTVYHVITRQQSSGSPPNFTFQKLNDPVEPFVADKTPHHTVLRLKDFPPNLQDLLLVSSTAVETIGLLTRSKTPLATDKPADAITNVFTTTELADDSRRAQLPMSEDMMETYPIGVALDLSSKEKVYKPIPTDEEIEYSPGPLPGLWVLNNEGVLASWWVVYNESIRAGTTYSGIGGSSEVIPASPAPALASSTAPVPAFASPVSKPTFGSPSPATPAFGGPSALGTKASPWATAGGAASSTPTFGQPSFGKPAAPAFGQASFPGLGQKVSPWATGSTTSAAPAFGQSGFASAGTAPGKVFGSSFTAPSSGGFASFATKSGFASLSAPSGGSSIFSSKPGAPLTSAAPEVSMDTDTAFPPPSTKTDKPAFGSSPFVLGSTFKADPTAAHDIEKPKEGESKSLFDTGFGLSLEDAAKQPASAAESKDEEMRSTTPPLPPPTETKPKSIFESTTPTTTPAPQKFEFKTTTPSGFSTLLGSTKPVASSMPNIFATPKPTSAEKPKSIFDTLKPKEESKENLLKASEPPLPPDTTSKAVFQPGSSSSESAESSPGAAAKAAFKVGNDETPKPQKELAPKPEAVPLPPDFVKAKPKTEAKETKAEEPAVSPNLPVKPLAKKAEPIPAVPESASEEEQGQAEEEEAESGEEEEEEEEEGEGEEEEEEEEEEEEEEEEGEEGEEQSEAGSEGSGVDVAKDLSPTAKFGSMTPGYTPHTSLGGMAESTFSTISRSEVAEQSRPLFGEITKNAPPLFPAAGPLPVSPRSPSPVRGVVRSSILRPTETPRPVDTTPVPSRKGLLQKTASFGMSTGQKPAVDPNVKAQRKLAEKLKAEEQVLVDPEDEGIQQILQSKVEPTLRMNEFLAVDTKLAPMKPGRDDVPNACETLWRDINRMIDRLGLNSRSLQSFILGHTSHGKPGGRQKDDLEKPDDWVLIEAYDLGDMIDNKLARELEAGRIKDVEGTMAAIHNLGRDLAKLRAKEEDLRKLFNAQVDPDQIALTKALPLSAEQLAQQNELRRSYASFSKLLTEAEEALTVLKAKLASANAARGRRGAGAAQVPTVDAIIRTINKMTSMAEKRSGDIDVLESQMRKLRIGSLGPAGTPNGNGVGAGTVVPATPGGGGRSRESSPFVTPQSSRRAMFMSPGSVGTATPRGLLAATGTPSPTKKKLSMYTAEEKRELRAREAKRKATLRMLRESLARVGPNVVRLRDDD</sequence>
<keyword id="KW-0002">3D-structure</keyword>
<keyword id="KW-0175">Coiled coil</keyword>
<keyword id="KW-0472">Membrane</keyword>
<keyword id="KW-0509">mRNA transport</keyword>
<keyword id="KW-0906">Nuclear pore complex</keyword>
<keyword id="KW-0539">Nucleus</keyword>
<keyword id="KW-0653">Protein transport</keyword>
<keyword id="KW-1185">Reference proteome</keyword>
<keyword id="KW-0677">Repeat</keyword>
<keyword id="KW-0811">Translocation</keyword>
<keyword id="KW-0813">Transport</keyword>
<keyword id="KW-0853">WD repeat</keyword>
<feature type="chain" id="PRO_0000433173" description="Nucleoporin NUP159">
    <location>
        <begin position="1"/>
        <end position="1481"/>
    </location>
</feature>
<feature type="repeat" description="WD 1" evidence="2">
    <location>
        <begin position="106"/>
        <end position="146"/>
    </location>
</feature>
<feature type="repeat" description="WD 2" evidence="2">
    <location>
        <begin position="201"/>
        <end position="241"/>
    </location>
</feature>
<feature type="repeat" description="PXFG 1">
    <location>
        <begin position="483"/>
        <end position="486"/>
    </location>
</feature>
<feature type="repeat" description="PXFG 2">
    <location>
        <begin position="493"/>
        <end position="496"/>
    </location>
</feature>
<feature type="repeat" description="PXFG 3">
    <location>
        <begin position="519"/>
        <end position="522"/>
    </location>
</feature>
<feature type="repeat" description="PXFG 4">
    <location>
        <begin position="524"/>
        <end position="527"/>
    </location>
</feature>
<feature type="repeat" description="PXFG 5">
    <location>
        <begin position="532"/>
        <end position="535"/>
    </location>
</feature>
<feature type="repeat" description="PXFG 6">
    <location>
        <begin position="559"/>
        <end position="562"/>
    </location>
</feature>
<feature type="repeat" description="PXFG 7">
    <location>
        <begin position="644"/>
        <end position="647"/>
    </location>
</feature>
<feature type="region of interest" description="Disordered" evidence="3">
    <location>
        <begin position="607"/>
        <end position="647"/>
    </location>
</feature>
<feature type="region of interest" description="Disordered" evidence="3">
    <location>
        <begin position="662"/>
        <end position="991"/>
    </location>
</feature>
<feature type="region of interest" description="Disordered" evidence="3">
    <location>
        <begin position="1385"/>
        <end position="1404"/>
    </location>
</feature>
<feature type="region of interest" description="Disordered" evidence="3">
    <location>
        <begin position="1414"/>
        <end position="1443"/>
    </location>
</feature>
<feature type="coiled-coil region" evidence="2">
    <location>
        <begin position="903"/>
        <end position="957"/>
    </location>
</feature>
<feature type="coiled-coil region" evidence="2">
    <location>
        <begin position="1233"/>
        <end position="1318"/>
    </location>
</feature>
<feature type="short sequence motif" description="Bipartite nuclear localization signal" evidence="2">
    <location>
        <begin position="1345"/>
        <end position="1352"/>
    </location>
</feature>
<feature type="short sequence motif" description="Bipartite nuclear localization signal" evidence="2">
    <location>
        <begin position="1435"/>
        <end position="1442"/>
    </location>
</feature>
<feature type="compositionally biased region" description="Low complexity" evidence="3">
    <location>
        <begin position="607"/>
        <end position="616"/>
    </location>
</feature>
<feature type="compositionally biased region" description="Basic and acidic residues" evidence="3">
    <location>
        <begin position="663"/>
        <end position="677"/>
    </location>
</feature>
<feature type="compositionally biased region" description="Polar residues" evidence="3">
    <location>
        <begin position="724"/>
        <end position="734"/>
    </location>
</feature>
<feature type="compositionally biased region" description="Polar residues" evidence="3">
    <location>
        <begin position="741"/>
        <end position="763"/>
    </location>
</feature>
<feature type="compositionally biased region" description="Basic and acidic residues" evidence="3">
    <location>
        <begin position="773"/>
        <end position="794"/>
    </location>
</feature>
<feature type="compositionally biased region" description="Low complexity" evidence="3">
    <location>
        <begin position="814"/>
        <end position="833"/>
    </location>
</feature>
<feature type="compositionally biased region" description="Basic and acidic residues" evidence="3">
    <location>
        <begin position="837"/>
        <end position="850"/>
    </location>
</feature>
<feature type="compositionally biased region" description="Basic and acidic residues" evidence="3">
    <location>
        <begin position="862"/>
        <end position="877"/>
    </location>
</feature>
<feature type="compositionally biased region" description="Acidic residues" evidence="3">
    <location>
        <begin position="903"/>
        <end position="955"/>
    </location>
</feature>
<feature type="helix" evidence="6">
    <location>
        <begin position="1452"/>
        <end position="1470"/>
    </location>
</feature>
<reference key="1">
    <citation type="journal article" date="2011" name="Cell">
        <title>Insight into structure and assembly of the nuclear pore complex by utilizing the genome of a eukaryotic thermophile.</title>
        <authorList>
            <person name="Amlacher S."/>
            <person name="Sarges P."/>
            <person name="Flemming D."/>
            <person name="van Noort V."/>
            <person name="Kunze R."/>
            <person name="Devos D.P."/>
            <person name="Arumugam M."/>
            <person name="Bork P."/>
            <person name="Hurt E."/>
        </authorList>
    </citation>
    <scope>NUCLEOTIDE SEQUENCE [LARGE SCALE GENOMIC DNA]</scope>
    <source>
        <strain>DSM 1495 / CBS 144.50 / IMI 039719</strain>
    </source>
</reference>